<dbReference type="EC" id="7.1.1.2"/>
<dbReference type="EMBL" id="U41890">
    <property type="protein sequence ID" value="AAB46653.1"/>
    <property type="molecule type" value="Genomic_DNA"/>
</dbReference>
<dbReference type="SMR" id="O03780"/>
<dbReference type="GO" id="GO:0031966">
    <property type="term" value="C:mitochondrial membrane"/>
    <property type="evidence" value="ECO:0007669"/>
    <property type="project" value="UniProtKB-SubCell"/>
</dbReference>
<dbReference type="GO" id="GO:0008137">
    <property type="term" value="F:NADH dehydrogenase (ubiquinone) activity"/>
    <property type="evidence" value="ECO:0007669"/>
    <property type="project" value="UniProtKB-EC"/>
</dbReference>
<dbReference type="GO" id="GO:0048039">
    <property type="term" value="F:ubiquinone binding"/>
    <property type="evidence" value="ECO:0007669"/>
    <property type="project" value="TreeGrafter"/>
</dbReference>
<dbReference type="GO" id="GO:0042773">
    <property type="term" value="P:ATP synthesis coupled electron transport"/>
    <property type="evidence" value="ECO:0007669"/>
    <property type="project" value="InterPro"/>
</dbReference>
<dbReference type="GO" id="GO:0015990">
    <property type="term" value="P:electron transport coupled proton transport"/>
    <property type="evidence" value="ECO:0007669"/>
    <property type="project" value="TreeGrafter"/>
</dbReference>
<dbReference type="InterPro" id="IPR003918">
    <property type="entry name" value="NADH_UbQ_OxRdtase"/>
</dbReference>
<dbReference type="InterPro" id="IPR001750">
    <property type="entry name" value="ND/Mrp_TM"/>
</dbReference>
<dbReference type="PANTHER" id="PTHR43507">
    <property type="entry name" value="NADH-UBIQUINONE OXIDOREDUCTASE CHAIN 4"/>
    <property type="match status" value="1"/>
</dbReference>
<dbReference type="PANTHER" id="PTHR43507:SF20">
    <property type="entry name" value="NADH-UBIQUINONE OXIDOREDUCTASE CHAIN 4"/>
    <property type="match status" value="1"/>
</dbReference>
<dbReference type="Pfam" id="PF00361">
    <property type="entry name" value="Proton_antipo_M"/>
    <property type="match status" value="1"/>
</dbReference>
<keyword id="KW-0249">Electron transport</keyword>
<keyword id="KW-0472">Membrane</keyword>
<keyword id="KW-0496">Mitochondrion</keyword>
<keyword id="KW-0520">NAD</keyword>
<keyword id="KW-0679">Respiratory chain</keyword>
<keyword id="KW-1278">Translocase</keyword>
<keyword id="KW-0812">Transmembrane</keyword>
<keyword id="KW-1133">Transmembrane helix</keyword>
<keyword id="KW-0813">Transport</keyword>
<keyword id="KW-0830">Ubiquinone</keyword>
<accession>O03780</accession>
<organism>
    <name type="scientific">Trimeresurus albolabris</name>
    <name type="common">White-lipped pit viper</name>
    <name type="synonym">Cryptelytrops albolabris</name>
    <dbReference type="NCBI Taxonomy" id="8765"/>
    <lineage>
        <taxon>Eukaryota</taxon>
        <taxon>Metazoa</taxon>
        <taxon>Chordata</taxon>
        <taxon>Craniata</taxon>
        <taxon>Vertebrata</taxon>
        <taxon>Euteleostomi</taxon>
        <taxon>Lepidosauria</taxon>
        <taxon>Squamata</taxon>
        <taxon>Bifurcata</taxon>
        <taxon>Unidentata</taxon>
        <taxon>Episquamata</taxon>
        <taxon>Toxicofera</taxon>
        <taxon>Serpentes</taxon>
        <taxon>Colubroidea</taxon>
        <taxon>Viperidae</taxon>
        <taxon>Crotalinae</taxon>
        <taxon>Trimeresurus</taxon>
    </lineage>
</organism>
<comment type="function">
    <text evidence="1">Core subunit of the mitochondrial membrane respiratory chain NADH dehydrogenase (Complex I) that is believed to belong to the minimal assembly required for catalysis. Complex I functions in the transfer of electrons from NADH to the respiratory chain. The immediate electron acceptor for the enzyme is believed to be ubiquinone (By similarity).</text>
</comment>
<comment type="catalytic activity">
    <reaction>
        <text>a ubiquinone + NADH + 5 H(+)(in) = a ubiquinol + NAD(+) + 4 H(+)(out)</text>
        <dbReference type="Rhea" id="RHEA:29091"/>
        <dbReference type="Rhea" id="RHEA-COMP:9565"/>
        <dbReference type="Rhea" id="RHEA-COMP:9566"/>
        <dbReference type="ChEBI" id="CHEBI:15378"/>
        <dbReference type="ChEBI" id="CHEBI:16389"/>
        <dbReference type="ChEBI" id="CHEBI:17976"/>
        <dbReference type="ChEBI" id="CHEBI:57540"/>
        <dbReference type="ChEBI" id="CHEBI:57945"/>
        <dbReference type="EC" id="7.1.1.2"/>
    </reaction>
</comment>
<comment type="subcellular location">
    <subcellularLocation>
        <location evidence="1">Mitochondrion membrane</location>
        <topology evidence="1">Multi-pass membrane protein</topology>
    </subcellularLocation>
</comment>
<comment type="similarity">
    <text evidence="3">Belongs to the complex I subunit 4 family.</text>
</comment>
<name>NU4M_TRIAB</name>
<proteinExistence type="inferred from homology"/>
<geneLocation type="mitochondrion"/>
<evidence type="ECO:0000250" key="1"/>
<evidence type="ECO:0000255" key="2"/>
<evidence type="ECO:0000305" key="3"/>
<gene>
    <name type="primary">MT-ND4</name>
    <name type="synonym">MTND4</name>
    <name type="synonym">NADH4</name>
    <name type="synonym">ND4</name>
</gene>
<protein>
    <recommendedName>
        <fullName>NADH-ubiquinone oxidoreductase chain 4</fullName>
        <ecNumber>7.1.1.2</ecNumber>
    </recommendedName>
    <alternativeName>
        <fullName>NADH dehydrogenase subunit 4</fullName>
    </alternativeName>
</protein>
<sequence>PIAGSMVLAAILLKLGGYGIIRMMQIMPTTKTDTFLPFLVLALWGAILANLTCLQQTDLKSLIAYSSISHMGLVVAAIIIQTPWGLSGAMALMIAHGFTSSALFCLANTTYERTHTRILILTRGFHNILPMATTWWLLTNLMNIATPPTMNFTSELLIMSTLFNWCPTTIILLGLSMLITASYSLHMFLSTQTGYPLLNNQTEPTHTREHLLMILHIVPLMMISMKPELVI</sequence>
<feature type="chain" id="PRO_0000117995" description="NADH-ubiquinone oxidoreductase chain 4">
    <location>
        <begin position="1" status="less than"/>
        <end position="231" status="greater than"/>
    </location>
</feature>
<feature type="transmembrane region" description="Helical" evidence="2">
    <location>
        <begin position="1"/>
        <end position="21"/>
    </location>
</feature>
<feature type="transmembrane region" description="Helical" evidence="2">
    <location>
        <begin position="34"/>
        <end position="54"/>
    </location>
</feature>
<feature type="transmembrane region" description="Helical" evidence="2">
    <location>
        <begin position="61"/>
        <end position="80"/>
    </location>
</feature>
<feature type="transmembrane region" description="Helical" evidence="2">
    <location>
        <begin position="84"/>
        <end position="106"/>
    </location>
</feature>
<feature type="transmembrane region" description="Helical" evidence="2">
    <location>
        <begin position="118"/>
        <end position="138"/>
    </location>
</feature>
<feature type="transmembrane region" description="Helical" evidence="2">
    <location>
        <begin position="156"/>
        <end position="178"/>
    </location>
</feature>
<feature type="non-terminal residue">
    <location>
        <position position="1"/>
    </location>
</feature>
<feature type="non-terminal residue">
    <location>
        <position position="231"/>
    </location>
</feature>
<reference key="1">
    <citation type="journal article" date="1996" name="Copeia">
        <title>Crotaline intergeneric relationships based on mitochondrial DNA sequence data.</title>
        <authorList>
            <person name="Kraus F."/>
            <person name="Mink D.G."/>
            <person name="Brown W.M."/>
        </authorList>
    </citation>
    <scope>NUCLEOTIDE SEQUENCE [GENOMIC DNA]</scope>
</reference>